<gene>
    <name evidence="1" type="primary">udk</name>
    <name type="ordered locus">SEQ_0699</name>
</gene>
<proteinExistence type="inferred from homology"/>
<accession>C0M9M0</accession>
<reference key="1">
    <citation type="journal article" date="2009" name="PLoS Pathog.">
        <title>Genomic evidence for the evolution of Streptococcus equi: host restriction, increased virulence, and genetic exchange with human pathogens.</title>
        <authorList>
            <person name="Holden M.T.G."/>
            <person name="Heather Z."/>
            <person name="Paillot R."/>
            <person name="Steward K.F."/>
            <person name="Webb K."/>
            <person name="Ainslie F."/>
            <person name="Jourdan T."/>
            <person name="Bason N.C."/>
            <person name="Holroyd N.E."/>
            <person name="Mungall K."/>
            <person name="Quail M.A."/>
            <person name="Sanders M."/>
            <person name="Simmonds M."/>
            <person name="Willey D."/>
            <person name="Brooks K."/>
            <person name="Aanensen D.M."/>
            <person name="Spratt B.G."/>
            <person name="Jolley K.A."/>
            <person name="Maiden M.C.J."/>
            <person name="Kehoe M."/>
            <person name="Chanter N."/>
            <person name="Bentley S.D."/>
            <person name="Robinson C."/>
            <person name="Maskell D.J."/>
            <person name="Parkhill J."/>
            <person name="Waller A.S."/>
        </authorList>
    </citation>
    <scope>NUCLEOTIDE SEQUENCE [LARGE SCALE GENOMIC DNA]</scope>
    <source>
        <strain>4047</strain>
    </source>
</reference>
<evidence type="ECO:0000255" key="1">
    <source>
        <dbReference type="HAMAP-Rule" id="MF_00551"/>
    </source>
</evidence>
<sequence>MLKKPIIIGVTGGSGGGKTSVSRAILNSFPNARIAMIQHDSYYKDQSHISFEERVKTNYDHPLAFDTDFMIQQLKELLAGRPVDIPIYDYKEHTRSNRTFRQEPQDVIIVEGILVLEDERLRELMDIKLFVDTDDDIRIIRRIQRDMVERGRSLESIIEQYTSVVKPMYHQFIEPSKRYADIVIPEGVSNVVAIDLINTKIASILGEL</sequence>
<name>URK_STRE4</name>
<protein>
    <recommendedName>
        <fullName evidence="1">Uridine kinase</fullName>
        <ecNumber evidence="1">2.7.1.48</ecNumber>
    </recommendedName>
    <alternativeName>
        <fullName evidence="1">Cytidine monophosphokinase</fullName>
    </alternativeName>
    <alternativeName>
        <fullName evidence="1">Uridine monophosphokinase</fullName>
    </alternativeName>
</protein>
<dbReference type="EC" id="2.7.1.48" evidence="1"/>
<dbReference type="EMBL" id="FM204883">
    <property type="protein sequence ID" value="CAW93059.1"/>
    <property type="molecule type" value="Genomic_DNA"/>
</dbReference>
<dbReference type="RefSeq" id="WP_012515313.1">
    <property type="nucleotide sequence ID" value="NC_012471.1"/>
</dbReference>
<dbReference type="SMR" id="C0M9M0"/>
<dbReference type="GeneID" id="83704516"/>
<dbReference type="KEGG" id="seu:SEQ_0699"/>
<dbReference type="HOGENOM" id="CLU_021278_1_2_9"/>
<dbReference type="OrthoDB" id="9777642at2"/>
<dbReference type="UniPathway" id="UPA00574">
    <property type="reaction ID" value="UER00637"/>
</dbReference>
<dbReference type="UniPathway" id="UPA00579">
    <property type="reaction ID" value="UER00640"/>
</dbReference>
<dbReference type="Proteomes" id="UP000001365">
    <property type="component" value="Chromosome"/>
</dbReference>
<dbReference type="GO" id="GO:0005737">
    <property type="term" value="C:cytoplasm"/>
    <property type="evidence" value="ECO:0007669"/>
    <property type="project" value="UniProtKB-SubCell"/>
</dbReference>
<dbReference type="GO" id="GO:0005524">
    <property type="term" value="F:ATP binding"/>
    <property type="evidence" value="ECO:0007669"/>
    <property type="project" value="UniProtKB-UniRule"/>
</dbReference>
<dbReference type="GO" id="GO:0043771">
    <property type="term" value="F:cytidine kinase activity"/>
    <property type="evidence" value="ECO:0007669"/>
    <property type="project" value="RHEA"/>
</dbReference>
<dbReference type="GO" id="GO:0004849">
    <property type="term" value="F:uridine kinase activity"/>
    <property type="evidence" value="ECO:0007669"/>
    <property type="project" value="UniProtKB-UniRule"/>
</dbReference>
<dbReference type="GO" id="GO:0044211">
    <property type="term" value="P:CTP salvage"/>
    <property type="evidence" value="ECO:0007669"/>
    <property type="project" value="UniProtKB-UniRule"/>
</dbReference>
<dbReference type="GO" id="GO:0044206">
    <property type="term" value="P:UMP salvage"/>
    <property type="evidence" value="ECO:0007669"/>
    <property type="project" value="UniProtKB-UniRule"/>
</dbReference>
<dbReference type="CDD" id="cd02023">
    <property type="entry name" value="UMPK"/>
    <property type="match status" value="1"/>
</dbReference>
<dbReference type="Gene3D" id="3.40.50.300">
    <property type="entry name" value="P-loop containing nucleotide triphosphate hydrolases"/>
    <property type="match status" value="1"/>
</dbReference>
<dbReference type="HAMAP" id="MF_00551">
    <property type="entry name" value="Uridine_kinase"/>
    <property type="match status" value="1"/>
</dbReference>
<dbReference type="InterPro" id="IPR027417">
    <property type="entry name" value="P-loop_NTPase"/>
</dbReference>
<dbReference type="InterPro" id="IPR006083">
    <property type="entry name" value="PRK/URK"/>
</dbReference>
<dbReference type="InterPro" id="IPR026008">
    <property type="entry name" value="Uridine_kinase"/>
</dbReference>
<dbReference type="InterPro" id="IPR000764">
    <property type="entry name" value="Uridine_kinase-like"/>
</dbReference>
<dbReference type="NCBIfam" id="NF004018">
    <property type="entry name" value="PRK05480.1"/>
    <property type="match status" value="1"/>
</dbReference>
<dbReference type="NCBIfam" id="TIGR00235">
    <property type="entry name" value="udk"/>
    <property type="match status" value="1"/>
</dbReference>
<dbReference type="PANTHER" id="PTHR10285">
    <property type="entry name" value="URIDINE KINASE"/>
    <property type="match status" value="1"/>
</dbReference>
<dbReference type="Pfam" id="PF00485">
    <property type="entry name" value="PRK"/>
    <property type="match status" value="1"/>
</dbReference>
<dbReference type="PRINTS" id="PR00988">
    <property type="entry name" value="URIDINKINASE"/>
</dbReference>
<dbReference type="SUPFAM" id="SSF52540">
    <property type="entry name" value="P-loop containing nucleoside triphosphate hydrolases"/>
    <property type="match status" value="1"/>
</dbReference>
<keyword id="KW-0067">ATP-binding</keyword>
<keyword id="KW-0963">Cytoplasm</keyword>
<keyword id="KW-0418">Kinase</keyword>
<keyword id="KW-0547">Nucleotide-binding</keyword>
<keyword id="KW-0808">Transferase</keyword>
<feature type="chain" id="PRO_1000200521" description="Uridine kinase">
    <location>
        <begin position="1"/>
        <end position="208"/>
    </location>
</feature>
<feature type="binding site" evidence="1">
    <location>
        <begin position="12"/>
        <end position="19"/>
    </location>
    <ligand>
        <name>ATP</name>
        <dbReference type="ChEBI" id="CHEBI:30616"/>
    </ligand>
</feature>
<comment type="catalytic activity">
    <reaction evidence="1">
        <text>uridine + ATP = UMP + ADP + H(+)</text>
        <dbReference type="Rhea" id="RHEA:16825"/>
        <dbReference type="ChEBI" id="CHEBI:15378"/>
        <dbReference type="ChEBI" id="CHEBI:16704"/>
        <dbReference type="ChEBI" id="CHEBI:30616"/>
        <dbReference type="ChEBI" id="CHEBI:57865"/>
        <dbReference type="ChEBI" id="CHEBI:456216"/>
        <dbReference type="EC" id="2.7.1.48"/>
    </reaction>
</comment>
<comment type="catalytic activity">
    <reaction evidence="1">
        <text>cytidine + ATP = CMP + ADP + H(+)</text>
        <dbReference type="Rhea" id="RHEA:24674"/>
        <dbReference type="ChEBI" id="CHEBI:15378"/>
        <dbReference type="ChEBI" id="CHEBI:17562"/>
        <dbReference type="ChEBI" id="CHEBI:30616"/>
        <dbReference type="ChEBI" id="CHEBI:60377"/>
        <dbReference type="ChEBI" id="CHEBI:456216"/>
        <dbReference type="EC" id="2.7.1.48"/>
    </reaction>
</comment>
<comment type="pathway">
    <text evidence="1">Pyrimidine metabolism; CTP biosynthesis via salvage pathway; CTP from cytidine: step 1/3.</text>
</comment>
<comment type="pathway">
    <text evidence="1">Pyrimidine metabolism; UMP biosynthesis via salvage pathway; UMP from uridine: step 1/1.</text>
</comment>
<comment type="subcellular location">
    <subcellularLocation>
        <location evidence="1">Cytoplasm</location>
    </subcellularLocation>
</comment>
<comment type="similarity">
    <text evidence="1">Belongs to the uridine kinase family.</text>
</comment>
<organism>
    <name type="scientific">Streptococcus equi subsp. equi (strain 4047)</name>
    <dbReference type="NCBI Taxonomy" id="553482"/>
    <lineage>
        <taxon>Bacteria</taxon>
        <taxon>Bacillati</taxon>
        <taxon>Bacillota</taxon>
        <taxon>Bacilli</taxon>
        <taxon>Lactobacillales</taxon>
        <taxon>Streptococcaceae</taxon>
        <taxon>Streptococcus</taxon>
    </lineage>
</organism>